<keyword id="KW-1003">Cell membrane</keyword>
<keyword id="KW-1015">Disulfide bond</keyword>
<keyword id="KW-0297">G-protein coupled receptor</keyword>
<keyword id="KW-0472">Membrane</keyword>
<keyword id="KW-0675">Receptor</keyword>
<keyword id="KW-1185">Reference proteome</keyword>
<keyword id="KW-0807">Transducer</keyword>
<keyword id="KW-0812">Transmembrane</keyword>
<keyword id="KW-1133">Transmembrane helix</keyword>
<proteinExistence type="evidence at transcript level"/>
<reference evidence="4" key="1">
    <citation type="submission" date="2005-12" db="EMBL/GenBank/DDBJ databases">
        <title>Molecular cloning of the porcine type 1 orexin receptor.</title>
        <authorList>
            <person name="Bin Y.F."/>
        </authorList>
    </citation>
    <scope>NUCLEOTIDE SEQUENCE [MRNA]</scope>
    <source>
        <tissue evidence="4">Hypothalamus</tissue>
    </source>
</reference>
<reference key="2">
    <citation type="submission" date="1998-10" db="EMBL/GenBank/DDBJ databases">
        <title>Partial cDNA sequence of the porcine type 1 orexin receptor.</title>
        <authorList>
            <person name="Matteri R.L."/>
            <person name="Dyer C.J."/>
        </authorList>
    </citation>
    <scope>NUCLEOTIDE SEQUENCE [MRNA] OF 135-220</scope>
    <source>
        <tissue>Hypothalamus</tissue>
    </source>
</reference>
<protein>
    <recommendedName>
        <fullName evidence="1">Orexin/Hypocretin receptor type 1</fullName>
    </recommendedName>
    <alternativeName>
        <fullName evidence="3">Orexin receptor type 1</fullName>
        <shortName>Ox-1-R</shortName>
        <shortName>Ox1-R</shortName>
        <shortName>Ox1R</shortName>
    </alternativeName>
</protein>
<name>OX1R_PIG</name>
<accession>O97661</accession>
<accession>Q2MK77</accession>
<gene>
    <name evidence="1" type="primary">HCRTR1</name>
</gene>
<organism>
    <name type="scientific">Sus scrofa</name>
    <name type="common">Pig</name>
    <dbReference type="NCBI Taxonomy" id="9823"/>
    <lineage>
        <taxon>Eukaryota</taxon>
        <taxon>Metazoa</taxon>
        <taxon>Chordata</taxon>
        <taxon>Craniata</taxon>
        <taxon>Vertebrata</taxon>
        <taxon>Euteleostomi</taxon>
        <taxon>Mammalia</taxon>
        <taxon>Eutheria</taxon>
        <taxon>Laurasiatheria</taxon>
        <taxon>Artiodactyla</taxon>
        <taxon>Suina</taxon>
        <taxon>Suidae</taxon>
        <taxon>Sus</taxon>
    </lineage>
</organism>
<sequence length="425" mass="47438">MEPSATPGPQMGVPTGVGDPSLVPPDYEEEFLSYLWRDYLYPKQYEWVLIAAYVAVFLVALVGNTLVCLAVWRNHHMRTVTNYFIVNLSLADVLVTAICLPASLLVDITESWLFGHALCKVIPYLQAVSVSVAVLTLSFIALDRWYAIYHPLLFKSTARRARGSILGIWAVSPAVMVPQAAVMECSSVLPELANRTRLFSVCDERWADDLYPKIYHSCFFIVTYLAPLGLMAMAYFQIFRKLWGRQIPGTTSALVRNWKRPSDQLEDQGQGPGAEPPPRARAFLAEVKQMRARRKTAKMLMVVLLVFALCYLPISVLNVLKRVFGMFRQTSDREAVYACFTFSHWLVYANSAANPIIYNFLSGKFREQFKAAFSCCLPGLGPCGSLKAPSPRSSASHKSLSLQSRCSVSKISEHVVLTSVTTVLP</sequence>
<evidence type="ECO:0000250" key="1">
    <source>
        <dbReference type="UniProtKB" id="O43613"/>
    </source>
</evidence>
<evidence type="ECO:0000255" key="2">
    <source>
        <dbReference type="PROSITE-ProRule" id="PRU00521"/>
    </source>
</evidence>
<evidence type="ECO:0000305" key="3">
    <source ref="1"/>
</evidence>
<evidence type="ECO:0000312" key="4">
    <source>
        <dbReference type="EMBL" id="ABC59143.1"/>
    </source>
</evidence>
<dbReference type="EMBL" id="DQ321701">
    <property type="protein sequence ID" value="ABC59143.1"/>
    <property type="molecule type" value="mRNA"/>
</dbReference>
<dbReference type="EMBL" id="AF097995">
    <property type="protein sequence ID" value="AAC68703.1"/>
    <property type="molecule type" value="mRNA"/>
</dbReference>
<dbReference type="RefSeq" id="NP_001036811.1">
    <property type="nucleotide sequence ID" value="NM_001043346.1"/>
</dbReference>
<dbReference type="SMR" id="O97661"/>
<dbReference type="FunCoup" id="O97661">
    <property type="interactions" value="101"/>
</dbReference>
<dbReference type="STRING" id="9823.ENSSSCP00000037633"/>
<dbReference type="GlyGen" id="O97661">
    <property type="glycosylation" value="1 site"/>
</dbReference>
<dbReference type="PaxDb" id="9823-ENSSSCP00000003905"/>
<dbReference type="GeneID" id="387287"/>
<dbReference type="KEGG" id="ssc:387287"/>
<dbReference type="CTD" id="3061"/>
<dbReference type="eggNOG" id="KOG3656">
    <property type="taxonomic scope" value="Eukaryota"/>
</dbReference>
<dbReference type="InParanoid" id="O97661"/>
<dbReference type="OrthoDB" id="9986530at2759"/>
<dbReference type="Proteomes" id="UP000008227">
    <property type="component" value="Unplaced"/>
</dbReference>
<dbReference type="Proteomes" id="UP000314985">
    <property type="component" value="Unplaced"/>
</dbReference>
<dbReference type="Proteomes" id="UP000694570">
    <property type="component" value="Unplaced"/>
</dbReference>
<dbReference type="Proteomes" id="UP000694571">
    <property type="component" value="Unplaced"/>
</dbReference>
<dbReference type="Proteomes" id="UP000694720">
    <property type="component" value="Unplaced"/>
</dbReference>
<dbReference type="Proteomes" id="UP000694722">
    <property type="component" value="Unplaced"/>
</dbReference>
<dbReference type="Proteomes" id="UP000694723">
    <property type="component" value="Unplaced"/>
</dbReference>
<dbReference type="Proteomes" id="UP000694724">
    <property type="component" value="Unplaced"/>
</dbReference>
<dbReference type="Proteomes" id="UP000694725">
    <property type="component" value="Unplaced"/>
</dbReference>
<dbReference type="Proteomes" id="UP000694726">
    <property type="component" value="Unplaced"/>
</dbReference>
<dbReference type="Proteomes" id="UP000694727">
    <property type="component" value="Unplaced"/>
</dbReference>
<dbReference type="Proteomes" id="UP000694728">
    <property type="component" value="Unplaced"/>
</dbReference>
<dbReference type="GO" id="GO:0005886">
    <property type="term" value="C:plasma membrane"/>
    <property type="evidence" value="ECO:0000250"/>
    <property type="project" value="UniProtKB"/>
</dbReference>
<dbReference type="GO" id="GO:0004930">
    <property type="term" value="F:G protein-coupled receptor activity"/>
    <property type="evidence" value="ECO:0000318"/>
    <property type="project" value="GO_Central"/>
</dbReference>
<dbReference type="GO" id="GO:0016499">
    <property type="term" value="F:orexin receptor activity"/>
    <property type="evidence" value="ECO:0000250"/>
    <property type="project" value="UniProtKB"/>
</dbReference>
<dbReference type="GO" id="GO:0032870">
    <property type="term" value="P:cellular response to hormone stimulus"/>
    <property type="evidence" value="ECO:0000318"/>
    <property type="project" value="GO_Central"/>
</dbReference>
<dbReference type="GO" id="GO:0007631">
    <property type="term" value="P:feeding behavior"/>
    <property type="evidence" value="ECO:0007669"/>
    <property type="project" value="InterPro"/>
</dbReference>
<dbReference type="GO" id="GO:0007218">
    <property type="term" value="P:neuropeptide signaling pathway"/>
    <property type="evidence" value="ECO:0000250"/>
    <property type="project" value="UniProtKB"/>
</dbReference>
<dbReference type="GO" id="GO:0051480">
    <property type="term" value="P:regulation of cytosolic calcium ion concentration"/>
    <property type="evidence" value="ECO:0000250"/>
    <property type="project" value="UniProtKB"/>
</dbReference>
<dbReference type="CDD" id="cd15208">
    <property type="entry name" value="7tmA_OXR"/>
    <property type="match status" value="1"/>
</dbReference>
<dbReference type="FunFam" id="1.20.1070.10:FF:000075">
    <property type="entry name" value="orexin receptor type 2"/>
    <property type="match status" value="1"/>
</dbReference>
<dbReference type="Gene3D" id="1.20.1070.10">
    <property type="entry name" value="Rhodopsin 7-helix transmembrane proteins"/>
    <property type="match status" value="1"/>
</dbReference>
<dbReference type="InterPro" id="IPR000276">
    <property type="entry name" value="GPCR_Rhodpsn"/>
</dbReference>
<dbReference type="InterPro" id="IPR017452">
    <property type="entry name" value="GPCR_Rhodpsn_7TM"/>
</dbReference>
<dbReference type="InterPro" id="IPR000204">
    <property type="entry name" value="Orexin_rcpt"/>
</dbReference>
<dbReference type="InterPro" id="IPR004059">
    <property type="entry name" value="OX1R"/>
</dbReference>
<dbReference type="PANTHER" id="PTHR45695:SF32">
    <property type="entry name" value="G PROTEIN-COUPLED RECEPTOR 15-LIKE"/>
    <property type="match status" value="1"/>
</dbReference>
<dbReference type="PANTHER" id="PTHR45695">
    <property type="entry name" value="LEUCOKININ RECEPTOR-RELATED"/>
    <property type="match status" value="1"/>
</dbReference>
<dbReference type="Pfam" id="PF00001">
    <property type="entry name" value="7tm_1"/>
    <property type="match status" value="1"/>
</dbReference>
<dbReference type="PRINTS" id="PR00237">
    <property type="entry name" value="GPCRRHODOPSN"/>
</dbReference>
<dbReference type="PRINTS" id="PR01521">
    <property type="entry name" value="OREXIN1R"/>
</dbReference>
<dbReference type="PRINTS" id="PR01064">
    <property type="entry name" value="OREXINR"/>
</dbReference>
<dbReference type="SMART" id="SM01381">
    <property type="entry name" value="7TM_GPCR_Srsx"/>
    <property type="match status" value="1"/>
</dbReference>
<dbReference type="SUPFAM" id="SSF81321">
    <property type="entry name" value="Family A G protein-coupled receptor-like"/>
    <property type="match status" value="1"/>
</dbReference>
<dbReference type="PROSITE" id="PS00237">
    <property type="entry name" value="G_PROTEIN_RECEP_F1_1"/>
    <property type="match status" value="1"/>
</dbReference>
<dbReference type="PROSITE" id="PS50262">
    <property type="entry name" value="G_PROTEIN_RECEP_F1_2"/>
    <property type="match status" value="1"/>
</dbReference>
<comment type="function">
    <text evidence="1">Moderately selective excitatory receptor for orexin-A and, with a lower affinity, for orexin-B neuropeptide. Triggers an increase in cytoplasmic Ca(2+) levels in response to orexin-A binding.</text>
</comment>
<comment type="subcellular location">
    <subcellularLocation>
        <location evidence="1">Cell membrane</location>
        <topology evidence="1">Multi-pass membrane protein</topology>
    </subcellularLocation>
</comment>
<comment type="domain">
    <text evidence="1">The N-terminal region is required for orexin signaling.</text>
</comment>
<comment type="similarity">
    <text evidence="2">Belongs to the G-protein coupled receptor 1 family.</text>
</comment>
<feature type="chain" id="PRO_0000069986" description="Orexin/Hypocretin receptor type 1">
    <location>
        <begin position="1"/>
        <end position="425"/>
    </location>
</feature>
<feature type="topological domain" description="Extracellular" evidence="1">
    <location>
        <begin position="1"/>
        <end position="46"/>
    </location>
</feature>
<feature type="transmembrane region" description="Helical; Name=1" evidence="1">
    <location>
        <begin position="47"/>
        <end position="67"/>
    </location>
</feature>
<feature type="topological domain" description="Cytoplasmic" evidence="1">
    <location>
        <begin position="68"/>
        <end position="82"/>
    </location>
</feature>
<feature type="transmembrane region" description="Helical; Name=2" evidence="1">
    <location>
        <begin position="83"/>
        <end position="105"/>
    </location>
</feature>
<feature type="topological domain" description="Extracellular" evidence="1">
    <location>
        <begin position="106"/>
        <end position="119"/>
    </location>
</feature>
<feature type="transmembrane region" description="Helical; Name=3" evidence="1">
    <location>
        <begin position="120"/>
        <end position="140"/>
    </location>
</feature>
<feature type="topological domain" description="Cytoplasmic" evidence="1">
    <location>
        <begin position="141"/>
        <end position="160"/>
    </location>
</feature>
<feature type="transmembrane region" description="Helical; Name=4" evidence="1">
    <location>
        <begin position="161"/>
        <end position="182"/>
    </location>
</feature>
<feature type="topological domain" description="Extracellular" evidence="1">
    <location>
        <begin position="183"/>
        <end position="213"/>
    </location>
</feature>
<feature type="transmembrane region" description="Helical; Name=5" evidence="1">
    <location>
        <begin position="214"/>
        <end position="235"/>
    </location>
</feature>
<feature type="topological domain" description="Cytoplasmic" evidence="1">
    <location>
        <begin position="236"/>
        <end position="298"/>
    </location>
</feature>
<feature type="transmembrane region" description="Helical; Name=6" evidence="1">
    <location>
        <begin position="299"/>
        <end position="321"/>
    </location>
</feature>
<feature type="topological domain" description="Extracellular" evidence="1">
    <location>
        <begin position="322"/>
        <end position="336"/>
    </location>
</feature>
<feature type="transmembrane region" description="Helical; Name=7" evidence="1">
    <location>
        <begin position="337"/>
        <end position="360"/>
    </location>
</feature>
<feature type="topological domain" description="Cytoplasmic" evidence="1">
    <location>
        <begin position="361"/>
        <end position="425"/>
    </location>
</feature>
<feature type="region of interest" description="Required for response to orexin-A" evidence="1">
    <location>
        <begin position="26"/>
        <end position="41"/>
    </location>
</feature>
<feature type="site" description="Important for responses to orexin" evidence="1">
    <location>
        <position position="36"/>
    </location>
</feature>
<feature type="disulfide bond" evidence="2">
    <location>
        <begin position="119"/>
        <end position="202"/>
    </location>
</feature>